<accession>Q9SUM2</accession>
<feature type="chain" id="PRO_0000125541" description="Probable small nuclear ribonucleoprotein F">
    <location>
        <begin position="1"/>
        <end position="88"/>
    </location>
</feature>
<feature type="domain" description="Sm" evidence="2">
    <location>
        <begin position="7"/>
        <end position="79"/>
    </location>
</feature>
<proteinExistence type="inferred from homology"/>
<sequence length="88" mass="9864">MATIPVNPKPFLNNLTGKTVIVKLKWGMEYKGFLASVDSYMNLQLGNTEEYIDGQLTGNLGEILIRCNNVLYVRGVPEDEELEDADQD</sequence>
<comment type="function">
    <text evidence="1">Probable common Sm protein, is found in U1 and U2 snRNPs and may be part of the spliceosome.</text>
</comment>
<comment type="subcellular location">
    <subcellularLocation>
        <location evidence="1">Nucleus</location>
    </subcellularLocation>
</comment>
<comment type="alternative products">
    <event type="alternative splicing"/>
    <isoform>
        <id>Q9SUM2-1</id>
        <name>1</name>
        <sequence type="displayed"/>
    </isoform>
    <text>A number of isoforms are produced. According to EST sequences.</text>
</comment>
<comment type="similarity">
    <text evidence="3">Belongs to the snRNP Sm proteins family. SmF/LSm6 subfamily.</text>
</comment>
<name>RUXF_ARATH</name>
<keyword id="KW-0025">Alternative splicing</keyword>
<keyword id="KW-0507">mRNA processing</keyword>
<keyword id="KW-0508">mRNA splicing</keyword>
<keyword id="KW-0539">Nucleus</keyword>
<keyword id="KW-1185">Reference proteome</keyword>
<keyword id="KW-0687">Ribonucleoprotein</keyword>
<keyword id="KW-0694">RNA-binding</keyword>
<keyword id="KW-0747">Spliceosome</keyword>
<gene>
    <name type="ordered locus">At4g30220</name>
    <name type="ORF">F9N11.70</name>
</gene>
<dbReference type="EMBL" id="AL109796">
    <property type="protein sequence ID" value="CAB52466.1"/>
    <property type="molecule type" value="Genomic_DNA"/>
</dbReference>
<dbReference type="EMBL" id="AL161576">
    <property type="protein sequence ID" value="CAB81015.1"/>
    <property type="molecule type" value="Genomic_DNA"/>
</dbReference>
<dbReference type="EMBL" id="CP002687">
    <property type="protein sequence ID" value="AEE85739.1"/>
    <property type="molecule type" value="Genomic_DNA"/>
</dbReference>
<dbReference type="EMBL" id="BT006382">
    <property type="protein sequence ID" value="AAP21190.1"/>
    <property type="molecule type" value="mRNA"/>
</dbReference>
<dbReference type="EMBL" id="AY087616">
    <property type="protein sequence ID" value="AAM65157.1"/>
    <property type="molecule type" value="mRNA"/>
</dbReference>
<dbReference type="PIR" id="T14082">
    <property type="entry name" value="T14082"/>
</dbReference>
<dbReference type="RefSeq" id="NP_194751.1">
    <molecule id="Q9SUM2-1"/>
    <property type="nucleotide sequence ID" value="NM_119168.4"/>
</dbReference>
<dbReference type="SMR" id="Q9SUM2"/>
<dbReference type="BioGRID" id="14432">
    <property type="interactions" value="11"/>
</dbReference>
<dbReference type="FunCoup" id="Q9SUM2">
    <property type="interactions" value="3565"/>
</dbReference>
<dbReference type="IntAct" id="Q9SUM2">
    <property type="interactions" value="6"/>
</dbReference>
<dbReference type="STRING" id="3702.Q9SUM2"/>
<dbReference type="iPTMnet" id="Q9SUM2"/>
<dbReference type="PaxDb" id="3702-AT4G30220.2"/>
<dbReference type="ProteomicsDB" id="228041">
    <molecule id="Q9SUM2-1"/>
</dbReference>
<dbReference type="EnsemblPlants" id="AT4G30220.1">
    <molecule id="Q9SUM2-1"/>
    <property type="protein sequence ID" value="AT4G30220.1"/>
    <property type="gene ID" value="AT4G30220"/>
</dbReference>
<dbReference type="GeneID" id="829145"/>
<dbReference type="Gramene" id="AT4G30220.1">
    <molecule id="Q9SUM2-1"/>
    <property type="protein sequence ID" value="AT4G30220.1"/>
    <property type="gene ID" value="AT4G30220"/>
</dbReference>
<dbReference type="KEGG" id="ath:AT4G30220"/>
<dbReference type="Araport" id="AT4G30220"/>
<dbReference type="TAIR" id="AT4G30220">
    <property type="gene designation" value="RUXF"/>
</dbReference>
<dbReference type="eggNOG" id="KOG3482">
    <property type="taxonomic scope" value="Eukaryota"/>
</dbReference>
<dbReference type="HOGENOM" id="CLU_076902_12_1_1"/>
<dbReference type="InParanoid" id="Q9SUM2"/>
<dbReference type="OMA" id="GYMNVQL"/>
<dbReference type="OrthoDB" id="1024998at2759"/>
<dbReference type="PhylomeDB" id="Q9SUM2"/>
<dbReference type="PRO" id="PR:Q9SUM2"/>
<dbReference type="Proteomes" id="UP000006548">
    <property type="component" value="Chromosome 4"/>
</dbReference>
<dbReference type="ExpressionAtlas" id="Q9SUM2">
    <property type="expression patterns" value="baseline and differential"/>
</dbReference>
<dbReference type="GO" id="GO:0120114">
    <property type="term" value="C:Sm-like protein family complex"/>
    <property type="evidence" value="ECO:0007669"/>
    <property type="project" value="UniProtKB-ARBA"/>
</dbReference>
<dbReference type="GO" id="GO:0005681">
    <property type="term" value="C:spliceosomal complex"/>
    <property type="evidence" value="ECO:0007669"/>
    <property type="project" value="UniProtKB-KW"/>
</dbReference>
<dbReference type="GO" id="GO:0003723">
    <property type="term" value="F:RNA binding"/>
    <property type="evidence" value="ECO:0007669"/>
    <property type="project" value="UniProtKB-KW"/>
</dbReference>
<dbReference type="GO" id="GO:0000398">
    <property type="term" value="P:mRNA splicing, via spliceosome"/>
    <property type="evidence" value="ECO:0007669"/>
    <property type="project" value="InterPro"/>
</dbReference>
<dbReference type="CDD" id="cd01722">
    <property type="entry name" value="Sm_F"/>
    <property type="match status" value="1"/>
</dbReference>
<dbReference type="FunFam" id="2.30.30.100:FF:000011">
    <property type="entry name" value="small nuclear ribonucleoprotein F"/>
    <property type="match status" value="1"/>
</dbReference>
<dbReference type="Gene3D" id="2.30.30.100">
    <property type="match status" value="1"/>
</dbReference>
<dbReference type="InterPro" id="IPR016487">
    <property type="entry name" value="Lsm6/sSmF"/>
</dbReference>
<dbReference type="InterPro" id="IPR010920">
    <property type="entry name" value="LSM_dom_sf"/>
</dbReference>
<dbReference type="InterPro" id="IPR047575">
    <property type="entry name" value="Sm"/>
</dbReference>
<dbReference type="InterPro" id="IPR001163">
    <property type="entry name" value="Sm_dom_euk/arc"/>
</dbReference>
<dbReference type="InterPro" id="IPR034100">
    <property type="entry name" value="Sm_F"/>
</dbReference>
<dbReference type="PANTHER" id="PTHR11021:SF0">
    <property type="entry name" value="SMALL NUCLEAR RIBONUCLEOPROTEIN F"/>
    <property type="match status" value="1"/>
</dbReference>
<dbReference type="PANTHER" id="PTHR11021">
    <property type="entry name" value="SMALL NUCLEAR RIBONUCLEOPROTEIN F SNRNP-F"/>
    <property type="match status" value="1"/>
</dbReference>
<dbReference type="Pfam" id="PF01423">
    <property type="entry name" value="LSM"/>
    <property type="match status" value="1"/>
</dbReference>
<dbReference type="PIRSF" id="PIRSF006609">
    <property type="entry name" value="snRNP_SmF"/>
    <property type="match status" value="1"/>
</dbReference>
<dbReference type="SMART" id="SM00651">
    <property type="entry name" value="Sm"/>
    <property type="match status" value="1"/>
</dbReference>
<dbReference type="SUPFAM" id="SSF50182">
    <property type="entry name" value="Sm-like ribonucleoproteins"/>
    <property type="match status" value="1"/>
</dbReference>
<dbReference type="PROSITE" id="PS52002">
    <property type="entry name" value="SM"/>
    <property type="match status" value="1"/>
</dbReference>
<organism>
    <name type="scientific">Arabidopsis thaliana</name>
    <name type="common">Mouse-ear cress</name>
    <dbReference type="NCBI Taxonomy" id="3702"/>
    <lineage>
        <taxon>Eukaryota</taxon>
        <taxon>Viridiplantae</taxon>
        <taxon>Streptophyta</taxon>
        <taxon>Embryophyta</taxon>
        <taxon>Tracheophyta</taxon>
        <taxon>Spermatophyta</taxon>
        <taxon>Magnoliopsida</taxon>
        <taxon>eudicotyledons</taxon>
        <taxon>Gunneridae</taxon>
        <taxon>Pentapetalae</taxon>
        <taxon>rosids</taxon>
        <taxon>malvids</taxon>
        <taxon>Brassicales</taxon>
        <taxon>Brassicaceae</taxon>
        <taxon>Camelineae</taxon>
        <taxon>Arabidopsis</taxon>
    </lineage>
</organism>
<reference key="1">
    <citation type="journal article" date="1999" name="Nature">
        <title>Sequence and analysis of chromosome 4 of the plant Arabidopsis thaliana.</title>
        <authorList>
            <person name="Mayer K.F.X."/>
            <person name="Schueller C."/>
            <person name="Wambutt R."/>
            <person name="Murphy G."/>
            <person name="Volckaert G."/>
            <person name="Pohl T."/>
            <person name="Duesterhoeft A."/>
            <person name="Stiekema W."/>
            <person name="Entian K.-D."/>
            <person name="Terryn N."/>
            <person name="Harris B."/>
            <person name="Ansorge W."/>
            <person name="Brandt P."/>
            <person name="Grivell L.A."/>
            <person name="Rieger M."/>
            <person name="Weichselgartner M."/>
            <person name="de Simone V."/>
            <person name="Obermaier B."/>
            <person name="Mache R."/>
            <person name="Mueller M."/>
            <person name="Kreis M."/>
            <person name="Delseny M."/>
            <person name="Puigdomenech P."/>
            <person name="Watson M."/>
            <person name="Schmidtheini T."/>
            <person name="Reichert B."/>
            <person name="Portetelle D."/>
            <person name="Perez-Alonso M."/>
            <person name="Boutry M."/>
            <person name="Bancroft I."/>
            <person name="Vos P."/>
            <person name="Hoheisel J."/>
            <person name="Zimmermann W."/>
            <person name="Wedler H."/>
            <person name="Ridley P."/>
            <person name="Langham S.-A."/>
            <person name="McCullagh B."/>
            <person name="Bilham L."/>
            <person name="Robben J."/>
            <person name="van der Schueren J."/>
            <person name="Grymonprez B."/>
            <person name="Chuang Y.-J."/>
            <person name="Vandenbussche F."/>
            <person name="Braeken M."/>
            <person name="Weltjens I."/>
            <person name="Voet M."/>
            <person name="Bastiaens I."/>
            <person name="Aert R."/>
            <person name="Defoor E."/>
            <person name="Weitzenegger T."/>
            <person name="Bothe G."/>
            <person name="Ramsperger U."/>
            <person name="Hilbert H."/>
            <person name="Braun M."/>
            <person name="Holzer E."/>
            <person name="Brandt A."/>
            <person name="Peters S."/>
            <person name="van Staveren M."/>
            <person name="Dirkse W."/>
            <person name="Mooijman P."/>
            <person name="Klein Lankhorst R."/>
            <person name="Rose M."/>
            <person name="Hauf J."/>
            <person name="Koetter P."/>
            <person name="Berneiser S."/>
            <person name="Hempel S."/>
            <person name="Feldpausch M."/>
            <person name="Lamberth S."/>
            <person name="Van den Daele H."/>
            <person name="De Keyser A."/>
            <person name="Buysshaert C."/>
            <person name="Gielen J."/>
            <person name="Villarroel R."/>
            <person name="De Clercq R."/>
            <person name="van Montagu M."/>
            <person name="Rogers J."/>
            <person name="Cronin A."/>
            <person name="Quail M.A."/>
            <person name="Bray-Allen S."/>
            <person name="Clark L."/>
            <person name="Doggett J."/>
            <person name="Hall S."/>
            <person name="Kay M."/>
            <person name="Lennard N."/>
            <person name="McLay K."/>
            <person name="Mayes R."/>
            <person name="Pettett A."/>
            <person name="Rajandream M.A."/>
            <person name="Lyne M."/>
            <person name="Benes V."/>
            <person name="Rechmann S."/>
            <person name="Borkova D."/>
            <person name="Bloecker H."/>
            <person name="Scharfe M."/>
            <person name="Grimm M."/>
            <person name="Loehnert T.-H."/>
            <person name="Dose S."/>
            <person name="de Haan M."/>
            <person name="Maarse A.C."/>
            <person name="Schaefer M."/>
            <person name="Mueller-Auer S."/>
            <person name="Gabel C."/>
            <person name="Fuchs M."/>
            <person name="Fartmann B."/>
            <person name="Granderath K."/>
            <person name="Dauner D."/>
            <person name="Herzl A."/>
            <person name="Neumann S."/>
            <person name="Argiriou A."/>
            <person name="Vitale D."/>
            <person name="Liguori R."/>
            <person name="Piravandi E."/>
            <person name="Massenet O."/>
            <person name="Quigley F."/>
            <person name="Clabauld G."/>
            <person name="Muendlein A."/>
            <person name="Felber R."/>
            <person name="Schnabl S."/>
            <person name="Hiller R."/>
            <person name="Schmidt W."/>
            <person name="Lecharny A."/>
            <person name="Aubourg S."/>
            <person name="Chefdor F."/>
            <person name="Cooke R."/>
            <person name="Berger C."/>
            <person name="Monfort A."/>
            <person name="Casacuberta E."/>
            <person name="Gibbons T."/>
            <person name="Weber N."/>
            <person name="Vandenbol M."/>
            <person name="Bargues M."/>
            <person name="Terol J."/>
            <person name="Torres A."/>
            <person name="Perez-Perez A."/>
            <person name="Purnelle B."/>
            <person name="Bent E."/>
            <person name="Johnson S."/>
            <person name="Tacon D."/>
            <person name="Jesse T."/>
            <person name="Heijnen L."/>
            <person name="Schwarz S."/>
            <person name="Scholler P."/>
            <person name="Heber S."/>
            <person name="Francs P."/>
            <person name="Bielke C."/>
            <person name="Frishman D."/>
            <person name="Haase D."/>
            <person name="Lemcke K."/>
            <person name="Mewes H.-W."/>
            <person name="Stocker S."/>
            <person name="Zaccaria P."/>
            <person name="Bevan M."/>
            <person name="Wilson R.K."/>
            <person name="de la Bastide M."/>
            <person name="Habermann K."/>
            <person name="Parnell L."/>
            <person name="Dedhia N."/>
            <person name="Gnoj L."/>
            <person name="Schutz K."/>
            <person name="Huang E."/>
            <person name="Spiegel L."/>
            <person name="Sekhon M."/>
            <person name="Murray J."/>
            <person name="Sheet P."/>
            <person name="Cordes M."/>
            <person name="Abu-Threideh J."/>
            <person name="Stoneking T."/>
            <person name="Kalicki J."/>
            <person name="Graves T."/>
            <person name="Harmon G."/>
            <person name="Edwards J."/>
            <person name="Latreille P."/>
            <person name="Courtney L."/>
            <person name="Cloud J."/>
            <person name="Abbott A."/>
            <person name="Scott K."/>
            <person name="Johnson D."/>
            <person name="Minx P."/>
            <person name="Bentley D."/>
            <person name="Fulton B."/>
            <person name="Miller N."/>
            <person name="Greco T."/>
            <person name="Kemp K."/>
            <person name="Kramer J."/>
            <person name="Fulton L."/>
            <person name="Mardis E."/>
            <person name="Dante M."/>
            <person name="Pepin K."/>
            <person name="Hillier L.W."/>
            <person name="Nelson J."/>
            <person name="Spieth J."/>
            <person name="Ryan E."/>
            <person name="Andrews S."/>
            <person name="Geisel C."/>
            <person name="Layman D."/>
            <person name="Du H."/>
            <person name="Ali J."/>
            <person name="Berghoff A."/>
            <person name="Jones K."/>
            <person name="Drone K."/>
            <person name="Cotton M."/>
            <person name="Joshu C."/>
            <person name="Antonoiu B."/>
            <person name="Zidanic M."/>
            <person name="Strong C."/>
            <person name="Sun H."/>
            <person name="Lamar B."/>
            <person name="Yordan C."/>
            <person name="Ma P."/>
            <person name="Zhong J."/>
            <person name="Preston R."/>
            <person name="Vil D."/>
            <person name="Shekher M."/>
            <person name="Matero A."/>
            <person name="Shah R."/>
            <person name="Swaby I.K."/>
            <person name="O'Shaughnessy A."/>
            <person name="Rodriguez M."/>
            <person name="Hoffman J."/>
            <person name="Till S."/>
            <person name="Granat S."/>
            <person name="Shohdy N."/>
            <person name="Hasegawa A."/>
            <person name="Hameed A."/>
            <person name="Lodhi M."/>
            <person name="Johnson A."/>
            <person name="Chen E."/>
            <person name="Marra M.A."/>
            <person name="Martienssen R."/>
            <person name="McCombie W.R."/>
        </authorList>
    </citation>
    <scope>NUCLEOTIDE SEQUENCE [LARGE SCALE GENOMIC DNA]</scope>
    <source>
        <strain>cv. Columbia</strain>
    </source>
</reference>
<reference key="2">
    <citation type="journal article" date="2017" name="Plant J.">
        <title>Araport11: a complete reannotation of the Arabidopsis thaliana reference genome.</title>
        <authorList>
            <person name="Cheng C.Y."/>
            <person name="Krishnakumar V."/>
            <person name="Chan A.P."/>
            <person name="Thibaud-Nissen F."/>
            <person name="Schobel S."/>
            <person name="Town C.D."/>
        </authorList>
    </citation>
    <scope>GENOME REANNOTATION</scope>
    <source>
        <strain>cv. Columbia</strain>
    </source>
</reference>
<reference key="3">
    <citation type="journal article" date="2003" name="Science">
        <title>Empirical analysis of transcriptional activity in the Arabidopsis genome.</title>
        <authorList>
            <person name="Yamada K."/>
            <person name="Lim J."/>
            <person name="Dale J.M."/>
            <person name="Chen H."/>
            <person name="Shinn P."/>
            <person name="Palm C.J."/>
            <person name="Southwick A.M."/>
            <person name="Wu H.C."/>
            <person name="Kim C.J."/>
            <person name="Nguyen M."/>
            <person name="Pham P.K."/>
            <person name="Cheuk R.F."/>
            <person name="Karlin-Newmann G."/>
            <person name="Liu S.X."/>
            <person name="Lam B."/>
            <person name="Sakano H."/>
            <person name="Wu T."/>
            <person name="Yu G."/>
            <person name="Miranda M."/>
            <person name="Quach H.L."/>
            <person name="Tripp M."/>
            <person name="Chang C.H."/>
            <person name="Lee J.M."/>
            <person name="Toriumi M.J."/>
            <person name="Chan M.M."/>
            <person name="Tang C.C."/>
            <person name="Onodera C.S."/>
            <person name="Deng J.M."/>
            <person name="Akiyama K."/>
            <person name="Ansari Y."/>
            <person name="Arakawa T."/>
            <person name="Banh J."/>
            <person name="Banno F."/>
            <person name="Bowser L."/>
            <person name="Brooks S.Y."/>
            <person name="Carninci P."/>
            <person name="Chao Q."/>
            <person name="Choy N."/>
            <person name="Enju A."/>
            <person name="Goldsmith A.D."/>
            <person name="Gurjal M."/>
            <person name="Hansen N.F."/>
            <person name="Hayashizaki Y."/>
            <person name="Johnson-Hopson C."/>
            <person name="Hsuan V.W."/>
            <person name="Iida K."/>
            <person name="Karnes M."/>
            <person name="Khan S."/>
            <person name="Koesema E."/>
            <person name="Ishida J."/>
            <person name="Jiang P.X."/>
            <person name="Jones T."/>
            <person name="Kawai J."/>
            <person name="Kamiya A."/>
            <person name="Meyers C."/>
            <person name="Nakajima M."/>
            <person name="Narusaka M."/>
            <person name="Seki M."/>
            <person name="Sakurai T."/>
            <person name="Satou M."/>
            <person name="Tamse R."/>
            <person name="Vaysberg M."/>
            <person name="Wallender E.K."/>
            <person name="Wong C."/>
            <person name="Yamamura Y."/>
            <person name="Yuan S."/>
            <person name="Shinozaki K."/>
            <person name="Davis R.W."/>
            <person name="Theologis A."/>
            <person name="Ecker J.R."/>
        </authorList>
    </citation>
    <scope>NUCLEOTIDE SEQUENCE [LARGE SCALE MRNA]</scope>
    <source>
        <strain>cv. Columbia</strain>
    </source>
</reference>
<reference key="4">
    <citation type="submission" date="2002-03" db="EMBL/GenBank/DDBJ databases">
        <title>Full-length cDNA from Arabidopsis thaliana.</title>
        <authorList>
            <person name="Brover V.V."/>
            <person name="Troukhan M.E."/>
            <person name="Alexandrov N.A."/>
            <person name="Lu Y.-P."/>
            <person name="Flavell R.B."/>
            <person name="Feldmann K.A."/>
        </authorList>
    </citation>
    <scope>NUCLEOTIDE SEQUENCE [LARGE SCALE MRNA]</scope>
</reference>
<evidence type="ECO:0000250" key="1"/>
<evidence type="ECO:0000255" key="2">
    <source>
        <dbReference type="PROSITE-ProRule" id="PRU01346"/>
    </source>
</evidence>
<evidence type="ECO:0000305" key="3"/>
<protein>
    <recommendedName>
        <fullName>Probable small nuclear ribonucleoprotein F</fullName>
        <shortName>snRNP-F</shortName>
    </recommendedName>
    <alternativeName>
        <fullName>Sm protein F</fullName>
        <shortName>Sm-F</shortName>
        <shortName>SmF</shortName>
    </alternativeName>
</protein>